<evidence type="ECO:0000255" key="1">
    <source>
        <dbReference type="HAMAP-Rule" id="MF_01008"/>
    </source>
</evidence>
<evidence type="ECO:0000255" key="2">
    <source>
        <dbReference type="PROSITE-ProRule" id="PRU01076"/>
    </source>
</evidence>
<evidence type="ECO:0000305" key="3"/>
<protein>
    <recommendedName>
        <fullName>Transcriptional regulator MraZ</fullName>
    </recommendedName>
</protein>
<proteinExistence type="inferred from homology"/>
<dbReference type="EMBL" id="BX640449">
    <property type="protein sequence ID" value="CAE34570.1"/>
    <property type="status" value="ALT_INIT"/>
    <property type="molecule type" value="Genomic_DNA"/>
</dbReference>
<dbReference type="RefSeq" id="WP_010931263.1">
    <property type="nucleotide sequence ID" value="NC_002927.3"/>
</dbReference>
<dbReference type="SMR" id="Q7WFR4"/>
<dbReference type="GeneID" id="93205549"/>
<dbReference type="KEGG" id="bbr:BB4206"/>
<dbReference type="eggNOG" id="COG2001">
    <property type="taxonomic scope" value="Bacteria"/>
</dbReference>
<dbReference type="HOGENOM" id="CLU_107907_2_1_4"/>
<dbReference type="Proteomes" id="UP000001027">
    <property type="component" value="Chromosome"/>
</dbReference>
<dbReference type="GO" id="GO:0005737">
    <property type="term" value="C:cytoplasm"/>
    <property type="evidence" value="ECO:0007669"/>
    <property type="project" value="UniProtKB-UniRule"/>
</dbReference>
<dbReference type="GO" id="GO:0009295">
    <property type="term" value="C:nucleoid"/>
    <property type="evidence" value="ECO:0007669"/>
    <property type="project" value="UniProtKB-SubCell"/>
</dbReference>
<dbReference type="GO" id="GO:0003700">
    <property type="term" value="F:DNA-binding transcription factor activity"/>
    <property type="evidence" value="ECO:0007669"/>
    <property type="project" value="UniProtKB-UniRule"/>
</dbReference>
<dbReference type="GO" id="GO:0000976">
    <property type="term" value="F:transcription cis-regulatory region binding"/>
    <property type="evidence" value="ECO:0007669"/>
    <property type="project" value="TreeGrafter"/>
</dbReference>
<dbReference type="GO" id="GO:2000143">
    <property type="term" value="P:negative regulation of DNA-templated transcription initiation"/>
    <property type="evidence" value="ECO:0007669"/>
    <property type="project" value="TreeGrafter"/>
</dbReference>
<dbReference type="CDD" id="cd16321">
    <property type="entry name" value="MraZ_C"/>
    <property type="match status" value="1"/>
</dbReference>
<dbReference type="CDD" id="cd16320">
    <property type="entry name" value="MraZ_N"/>
    <property type="match status" value="1"/>
</dbReference>
<dbReference type="Gene3D" id="3.40.1550.20">
    <property type="entry name" value="Transcriptional regulator MraZ domain"/>
    <property type="match status" value="1"/>
</dbReference>
<dbReference type="HAMAP" id="MF_01008">
    <property type="entry name" value="MraZ"/>
    <property type="match status" value="1"/>
</dbReference>
<dbReference type="InterPro" id="IPR003444">
    <property type="entry name" value="MraZ"/>
</dbReference>
<dbReference type="InterPro" id="IPR035644">
    <property type="entry name" value="MraZ_C"/>
</dbReference>
<dbReference type="InterPro" id="IPR020603">
    <property type="entry name" value="MraZ_dom"/>
</dbReference>
<dbReference type="InterPro" id="IPR035642">
    <property type="entry name" value="MraZ_N"/>
</dbReference>
<dbReference type="InterPro" id="IPR038619">
    <property type="entry name" value="MraZ_sf"/>
</dbReference>
<dbReference type="InterPro" id="IPR007159">
    <property type="entry name" value="SpoVT-AbrB_dom"/>
</dbReference>
<dbReference type="InterPro" id="IPR037914">
    <property type="entry name" value="SpoVT-AbrB_sf"/>
</dbReference>
<dbReference type="NCBIfam" id="TIGR00242">
    <property type="entry name" value="division/cell wall cluster transcriptional repressor MraZ"/>
    <property type="match status" value="1"/>
</dbReference>
<dbReference type="PANTHER" id="PTHR34701">
    <property type="entry name" value="TRANSCRIPTIONAL REGULATOR MRAZ"/>
    <property type="match status" value="1"/>
</dbReference>
<dbReference type="PANTHER" id="PTHR34701:SF1">
    <property type="entry name" value="TRANSCRIPTIONAL REGULATOR MRAZ"/>
    <property type="match status" value="1"/>
</dbReference>
<dbReference type="Pfam" id="PF02381">
    <property type="entry name" value="MraZ"/>
    <property type="match status" value="2"/>
</dbReference>
<dbReference type="SUPFAM" id="SSF89447">
    <property type="entry name" value="AbrB/MazE/MraZ-like"/>
    <property type="match status" value="1"/>
</dbReference>
<dbReference type="PROSITE" id="PS51740">
    <property type="entry name" value="SPOVT_ABRB"/>
    <property type="match status" value="2"/>
</dbReference>
<accession>Q7WFR4</accession>
<name>MRAZ_BORBR</name>
<organism>
    <name type="scientific">Bordetella bronchiseptica (strain ATCC BAA-588 / NCTC 13252 / RB50)</name>
    <name type="common">Alcaligenes bronchisepticus</name>
    <dbReference type="NCBI Taxonomy" id="257310"/>
    <lineage>
        <taxon>Bacteria</taxon>
        <taxon>Pseudomonadati</taxon>
        <taxon>Pseudomonadota</taxon>
        <taxon>Betaproteobacteria</taxon>
        <taxon>Burkholderiales</taxon>
        <taxon>Alcaligenaceae</taxon>
        <taxon>Bordetella</taxon>
    </lineage>
</organism>
<comment type="subunit">
    <text evidence="1">Forms oligomers.</text>
</comment>
<comment type="subcellular location">
    <subcellularLocation>
        <location evidence="1">Cytoplasm</location>
        <location evidence="1">Nucleoid</location>
    </subcellularLocation>
</comment>
<comment type="similarity">
    <text evidence="1">Belongs to the MraZ family.</text>
</comment>
<comment type="sequence caution" evidence="3">
    <conflict type="erroneous initiation">
        <sequence resource="EMBL-CDS" id="CAE34570"/>
    </conflict>
</comment>
<feature type="chain" id="PRO_0000108462" description="Transcriptional regulator MraZ">
    <location>
        <begin position="1"/>
        <end position="142"/>
    </location>
</feature>
<feature type="domain" description="SpoVT-AbrB 1" evidence="2">
    <location>
        <begin position="5"/>
        <end position="51"/>
    </location>
</feature>
<feature type="domain" description="SpoVT-AbrB 2" evidence="2">
    <location>
        <begin position="77"/>
        <end position="120"/>
    </location>
</feature>
<gene>
    <name evidence="1" type="primary">mraZ</name>
    <name type="ordered locus">BB4206</name>
</gene>
<sequence length="142" mass="15732">MFQGSSALTLDAKGRISIPTRHRDALMDRAEGRLTLTRHPDGCLLVYPRPEWEEKRAQIAAFPMSARALQRLLLGNAQDVDIDGSGRVLIAPELRNASGMTRDVMLLGMGAHFELWDAASLARREAEDLAQGMPDVLNQFSF</sequence>
<reference key="1">
    <citation type="journal article" date="2003" name="Nat. Genet.">
        <title>Comparative analysis of the genome sequences of Bordetella pertussis, Bordetella parapertussis and Bordetella bronchiseptica.</title>
        <authorList>
            <person name="Parkhill J."/>
            <person name="Sebaihia M."/>
            <person name="Preston A."/>
            <person name="Murphy L.D."/>
            <person name="Thomson N.R."/>
            <person name="Harris D.E."/>
            <person name="Holden M.T.G."/>
            <person name="Churcher C.M."/>
            <person name="Bentley S.D."/>
            <person name="Mungall K.L."/>
            <person name="Cerdeno-Tarraga A.-M."/>
            <person name="Temple L."/>
            <person name="James K.D."/>
            <person name="Harris B."/>
            <person name="Quail M.A."/>
            <person name="Achtman M."/>
            <person name="Atkin R."/>
            <person name="Baker S."/>
            <person name="Basham D."/>
            <person name="Bason N."/>
            <person name="Cherevach I."/>
            <person name="Chillingworth T."/>
            <person name="Collins M."/>
            <person name="Cronin A."/>
            <person name="Davis P."/>
            <person name="Doggett J."/>
            <person name="Feltwell T."/>
            <person name="Goble A."/>
            <person name="Hamlin N."/>
            <person name="Hauser H."/>
            <person name="Holroyd S."/>
            <person name="Jagels K."/>
            <person name="Leather S."/>
            <person name="Moule S."/>
            <person name="Norberczak H."/>
            <person name="O'Neil S."/>
            <person name="Ormond D."/>
            <person name="Price C."/>
            <person name="Rabbinowitsch E."/>
            <person name="Rutter S."/>
            <person name="Sanders M."/>
            <person name="Saunders D."/>
            <person name="Seeger K."/>
            <person name="Sharp S."/>
            <person name="Simmonds M."/>
            <person name="Skelton J."/>
            <person name="Squares R."/>
            <person name="Squares S."/>
            <person name="Stevens K."/>
            <person name="Unwin L."/>
            <person name="Whitehead S."/>
            <person name="Barrell B.G."/>
            <person name="Maskell D.J."/>
        </authorList>
    </citation>
    <scope>NUCLEOTIDE SEQUENCE [LARGE SCALE GENOMIC DNA]</scope>
    <source>
        <strain>ATCC BAA-588 / NCTC 13252 / RB50</strain>
    </source>
</reference>
<keyword id="KW-0963">Cytoplasm</keyword>
<keyword id="KW-0238">DNA-binding</keyword>
<keyword id="KW-0677">Repeat</keyword>
<keyword id="KW-0804">Transcription</keyword>
<keyword id="KW-0805">Transcription regulation</keyword>